<name>DAPEL_LIMRJ</name>
<sequence length="381" mass="42310">MLTEEELIQIRRHLHQIPELALQEFDTHQYLVETIAGFNQAFLEVRTFKELPTALMVLVHGKNPQRTIGYRTDIDALPVEEQTGLPYSSTHPGVMHACGHDIHMTVALGVLNYFSEHQPQDNILFFFQPAEESENGGKRAYELGLFSGKWKPDEFYGLHDNPDLPAGAIGCRMGTLFAGTTEVNIDLNGKGGHAAYPQNANDTVVAAASLILQVQTVISRSIDPIQSGVITLGKIDGGTIRNVIAGHTRIEGTIRGLTQTMIETIDNRLKDVCEGIGCSFNMDVSLELNQGGYWPVENNPELTKRFIHYMEETPTVNFIETEPAMTGEDFGYLLAKFPGTMFWLGVEDDSQLHSATLTPNEKAIKRGVDAITGFLEYRMQN</sequence>
<reference key="1">
    <citation type="journal article" date="2008" name="DNA Res.">
        <title>Comparative genome analysis of Lactobacillus reuteri and Lactobacillus fermentum reveal a genomic island for reuterin and cobalamin production.</title>
        <authorList>
            <person name="Morita H."/>
            <person name="Toh H."/>
            <person name="Fukuda S."/>
            <person name="Horikawa H."/>
            <person name="Oshima K."/>
            <person name="Suzuki T."/>
            <person name="Murakami M."/>
            <person name="Hisamatsu S."/>
            <person name="Kato Y."/>
            <person name="Takizawa T."/>
            <person name="Fukuoka H."/>
            <person name="Yoshimura T."/>
            <person name="Itoh K."/>
            <person name="O'Sullivan D.J."/>
            <person name="McKay L.L."/>
            <person name="Ohno H."/>
            <person name="Kikuchi J."/>
            <person name="Masaoka T."/>
            <person name="Hattori M."/>
        </authorList>
    </citation>
    <scope>NUCLEOTIDE SEQUENCE [LARGE SCALE GENOMIC DNA]</scope>
    <source>
        <strain>JCM 1112</strain>
    </source>
</reference>
<protein>
    <recommendedName>
        <fullName evidence="1">N-acetyldiaminopimelate deacetylase</fullName>
        <ecNumber evidence="1">3.5.1.47</ecNumber>
    </recommendedName>
</protein>
<proteinExistence type="inferred from homology"/>
<gene>
    <name type="ordered locus">LAR_0594</name>
</gene>
<keyword id="KW-0028">Amino-acid biosynthesis</keyword>
<keyword id="KW-0220">Diaminopimelate biosynthesis</keyword>
<keyword id="KW-0378">Hydrolase</keyword>
<keyword id="KW-0457">Lysine biosynthesis</keyword>
<feature type="chain" id="PRO_0000376764" description="N-acetyldiaminopimelate deacetylase">
    <location>
        <begin position="1"/>
        <end position="381"/>
    </location>
</feature>
<feature type="active site" evidence="1">
    <location>
        <position position="73"/>
    </location>
</feature>
<feature type="active site" description="Proton acceptor" evidence="1">
    <location>
        <position position="132"/>
    </location>
</feature>
<accession>B2G6M8</accession>
<organism>
    <name type="scientific">Limosilactobacillus reuteri subsp. reuteri (strain JCM 1112)</name>
    <name type="common">Lactobacillus reuteri</name>
    <dbReference type="NCBI Taxonomy" id="557433"/>
    <lineage>
        <taxon>Bacteria</taxon>
        <taxon>Bacillati</taxon>
        <taxon>Bacillota</taxon>
        <taxon>Bacilli</taxon>
        <taxon>Lactobacillales</taxon>
        <taxon>Lactobacillaceae</taxon>
        <taxon>Limosilactobacillus</taxon>
    </lineage>
</organism>
<dbReference type="EC" id="3.5.1.47" evidence="1"/>
<dbReference type="EMBL" id="AP007281">
    <property type="protein sequence ID" value="BAG25110.1"/>
    <property type="molecule type" value="Genomic_DNA"/>
</dbReference>
<dbReference type="RefSeq" id="WP_003668294.1">
    <property type="nucleotide sequence ID" value="NC_010609.1"/>
</dbReference>
<dbReference type="SMR" id="B2G6M8"/>
<dbReference type="KEGG" id="lrf:LAR_0594"/>
<dbReference type="HOGENOM" id="CLU_023257_0_1_9"/>
<dbReference type="UniPathway" id="UPA00034">
    <property type="reaction ID" value="UER00024"/>
</dbReference>
<dbReference type="GO" id="GO:0050118">
    <property type="term" value="F:N-acetyldiaminopimelate deacetylase activity"/>
    <property type="evidence" value="ECO:0007669"/>
    <property type="project" value="UniProtKB-UniRule"/>
</dbReference>
<dbReference type="GO" id="GO:0019877">
    <property type="term" value="P:diaminopimelate biosynthetic process"/>
    <property type="evidence" value="ECO:0007669"/>
    <property type="project" value="UniProtKB-UniRule"/>
</dbReference>
<dbReference type="GO" id="GO:0009089">
    <property type="term" value="P:lysine biosynthetic process via diaminopimelate"/>
    <property type="evidence" value="ECO:0007669"/>
    <property type="project" value="UniProtKB-UniRule"/>
</dbReference>
<dbReference type="CDD" id="cd05670">
    <property type="entry name" value="M20_Acy1_YkuR-like"/>
    <property type="match status" value="1"/>
</dbReference>
<dbReference type="FunFam" id="3.30.70.360:FF:000001">
    <property type="entry name" value="N-acetyldiaminopimelate deacetylase"/>
    <property type="match status" value="1"/>
</dbReference>
<dbReference type="Gene3D" id="3.30.70.360">
    <property type="match status" value="1"/>
</dbReference>
<dbReference type="Gene3D" id="3.40.630.10">
    <property type="entry name" value="Zn peptidases"/>
    <property type="match status" value="1"/>
</dbReference>
<dbReference type="HAMAP" id="MF_01692">
    <property type="entry name" value="DapEL"/>
    <property type="match status" value="1"/>
</dbReference>
<dbReference type="InterPro" id="IPR023905">
    <property type="entry name" value="AcetylDAP_deacetylase"/>
</dbReference>
<dbReference type="InterPro" id="IPR017439">
    <property type="entry name" value="Amidohydrolase"/>
</dbReference>
<dbReference type="InterPro" id="IPR036264">
    <property type="entry name" value="Bact_exopeptidase_dim_dom"/>
</dbReference>
<dbReference type="InterPro" id="IPR002933">
    <property type="entry name" value="Peptidase_M20"/>
</dbReference>
<dbReference type="InterPro" id="IPR011650">
    <property type="entry name" value="Peptidase_M20_dimer"/>
</dbReference>
<dbReference type="NCBIfam" id="TIGR01891">
    <property type="entry name" value="amidohydrolases"/>
    <property type="match status" value="1"/>
</dbReference>
<dbReference type="PANTHER" id="PTHR11014:SF98">
    <property type="entry name" value="N-ACETYLDIAMINOPIMELATE DEACETYLASE"/>
    <property type="match status" value="1"/>
</dbReference>
<dbReference type="PANTHER" id="PTHR11014">
    <property type="entry name" value="PEPTIDASE M20 FAMILY MEMBER"/>
    <property type="match status" value="1"/>
</dbReference>
<dbReference type="Pfam" id="PF07687">
    <property type="entry name" value="M20_dimer"/>
    <property type="match status" value="1"/>
</dbReference>
<dbReference type="Pfam" id="PF01546">
    <property type="entry name" value="Peptidase_M20"/>
    <property type="match status" value="1"/>
</dbReference>
<dbReference type="PIRSF" id="PIRSF005962">
    <property type="entry name" value="Pept_M20D_amidohydro"/>
    <property type="match status" value="1"/>
</dbReference>
<dbReference type="SUPFAM" id="SSF55031">
    <property type="entry name" value="Bacterial exopeptidase dimerisation domain"/>
    <property type="match status" value="1"/>
</dbReference>
<dbReference type="SUPFAM" id="SSF53187">
    <property type="entry name" value="Zn-dependent exopeptidases"/>
    <property type="match status" value="1"/>
</dbReference>
<evidence type="ECO:0000255" key="1">
    <source>
        <dbReference type="HAMAP-Rule" id="MF_01692"/>
    </source>
</evidence>
<comment type="function">
    <text evidence="1">Catalyzes the conversion of N-acetyl-diaminopimelate to diaminopimelate and acetate.</text>
</comment>
<comment type="catalytic activity">
    <reaction evidence="1">
        <text>N-acetyl-(2S,6S)-2,6-diaminopimelate + H2O = (2S,6S)-2,6-diaminopimelate + acetate</text>
        <dbReference type="Rhea" id="RHEA:20405"/>
        <dbReference type="ChEBI" id="CHEBI:15377"/>
        <dbReference type="ChEBI" id="CHEBI:30089"/>
        <dbReference type="ChEBI" id="CHEBI:57609"/>
        <dbReference type="ChEBI" id="CHEBI:58767"/>
        <dbReference type="EC" id="3.5.1.47"/>
    </reaction>
</comment>
<comment type="pathway">
    <text evidence="1">Amino-acid biosynthesis; L-lysine biosynthesis via DAP pathway; LL-2,6-diaminopimelate from (S)-tetrahydrodipicolinate (acetylase route): step 3/3.</text>
</comment>
<comment type="similarity">
    <text evidence="1">Belongs to the peptidase M20A family. N-acetyldiaminopimelate deacetylase subfamily.</text>
</comment>